<gene>
    <name evidence="1" type="primary">upp</name>
    <name type="ordered locus">Fnod_0280</name>
</gene>
<name>UPP_FERNB</name>
<dbReference type="EC" id="2.4.2.9" evidence="1"/>
<dbReference type="EMBL" id="CP000771">
    <property type="protein sequence ID" value="ABS60146.1"/>
    <property type="molecule type" value="Genomic_DNA"/>
</dbReference>
<dbReference type="SMR" id="A7HJR3"/>
<dbReference type="STRING" id="381764.Fnod_0280"/>
<dbReference type="KEGG" id="fno:Fnod_0280"/>
<dbReference type="eggNOG" id="COG0035">
    <property type="taxonomic scope" value="Bacteria"/>
</dbReference>
<dbReference type="HOGENOM" id="CLU_067096_2_2_0"/>
<dbReference type="OrthoDB" id="9781675at2"/>
<dbReference type="UniPathway" id="UPA00574">
    <property type="reaction ID" value="UER00636"/>
</dbReference>
<dbReference type="Proteomes" id="UP000002415">
    <property type="component" value="Chromosome"/>
</dbReference>
<dbReference type="GO" id="GO:0005525">
    <property type="term" value="F:GTP binding"/>
    <property type="evidence" value="ECO:0007669"/>
    <property type="project" value="UniProtKB-KW"/>
</dbReference>
<dbReference type="GO" id="GO:0000287">
    <property type="term" value="F:magnesium ion binding"/>
    <property type="evidence" value="ECO:0007669"/>
    <property type="project" value="UniProtKB-UniRule"/>
</dbReference>
<dbReference type="GO" id="GO:0004845">
    <property type="term" value="F:uracil phosphoribosyltransferase activity"/>
    <property type="evidence" value="ECO:0007669"/>
    <property type="project" value="UniProtKB-UniRule"/>
</dbReference>
<dbReference type="GO" id="GO:0044206">
    <property type="term" value="P:UMP salvage"/>
    <property type="evidence" value="ECO:0007669"/>
    <property type="project" value="UniProtKB-UniRule"/>
</dbReference>
<dbReference type="GO" id="GO:0006223">
    <property type="term" value="P:uracil salvage"/>
    <property type="evidence" value="ECO:0007669"/>
    <property type="project" value="InterPro"/>
</dbReference>
<dbReference type="CDD" id="cd06223">
    <property type="entry name" value="PRTases_typeI"/>
    <property type="match status" value="1"/>
</dbReference>
<dbReference type="FunFam" id="3.40.50.2020:FF:000003">
    <property type="entry name" value="Uracil phosphoribosyltransferase"/>
    <property type="match status" value="1"/>
</dbReference>
<dbReference type="Gene3D" id="3.40.50.2020">
    <property type="match status" value="1"/>
</dbReference>
<dbReference type="HAMAP" id="MF_01218_B">
    <property type="entry name" value="Upp_B"/>
    <property type="match status" value="1"/>
</dbReference>
<dbReference type="InterPro" id="IPR000836">
    <property type="entry name" value="PRibTrfase_dom"/>
</dbReference>
<dbReference type="InterPro" id="IPR029057">
    <property type="entry name" value="PRTase-like"/>
</dbReference>
<dbReference type="InterPro" id="IPR034332">
    <property type="entry name" value="Upp_B"/>
</dbReference>
<dbReference type="InterPro" id="IPR050054">
    <property type="entry name" value="UPRTase/APRTase"/>
</dbReference>
<dbReference type="InterPro" id="IPR005765">
    <property type="entry name" value="Ura_phspho_trans"/>
</dbReference>
<dbReference type="NCBIfam" id="NF001097">
    <property type="entry name" value="PRK00129.1"/>
    <property type="match status" value="1"/>
</dbReference>
<dbReference type="NCBIfam" id="TIGR01091">
    <property type="entry name" value="upp"/>
    <property type="match status" value="1"/>
</dbReference>
<dbReference type="PANTHER" id="PTHR32315">
    <property type="entry name" value="ADENINE PHOSPHORIBOSYLTRANSFERASE"/>
    <property type="match status" value="1"/>
</dbReference>
<dbReference type="PANTHER" id="PTHR32315:SF4">
    <property type="entry name" value="URACIL PHOSPHORIBOSYLTRANSFERASE, CHLOROPLASTIC"/>
    <property type="match status" value="1"/>
</dbReference>
<dbReference type="Pfam" id="PF14681">
    <property type="entry name" value="UPRTase"/>
    <property type="match status" value="1"/>
</dbReference>
<dbReference type="SUPFAM" id="SSF53271">
    <property type="entry name" value="PRTase-like"/>
    <property type="match status" value="1"/>
</dbReference>
<protein>
    <recommendedName>
        <fullName evidence="1">Uracil phosphoribosyltransferase</fullName>
        <ecNumber evidence="1">2.4.2.9</ecNumber>
    </recommendedName>
    <alternativeName>
        <fullName evidence="1">UMP pyrophosphorylase</fullName>
    </alternativeName>
    <alternativeName>
        <fullName evidence="1">UPRTase</fullName>
    </alternativeName>
</protein>
<sequence>MLYVVDHPLIKHKLTIMRKKETGPKEFRELLREITLLITYEATRHIPVYELEVETPLEKTKGYYINDKDIVVIPILRAGLGMVDGILELLPNASVGHIGIYRDPETLKAVDYYFKTPKLHDKSEIFILDPMLATGVSAIDAITKVKELGGKQITFISLISSPEGVKAIEKAHPDVNIYTASLDRELNDHGYILPGLGDAGDRLFRTK</sequence>
<feature type="chain" id="PRO_1000139127" description="Uracil phosphoribosyltransferase">
    <location>
        <begin position="1"/>
        <end position="207"/>
    </location>
</feature>
<feature type="binding site" evidence="1">
    <location>
        <position position="77"/>
    </location>
    <ligand>
        <name>5-phospho-alpha-D-ribose 1-diphosphate</name>
        <dbReference type="ChEBI" id="CHEBI:58017"/>
    </ligand>
</feature>
<feature type="binding site" evidence="1">
    <location>
        <position position="102"/>
    </location>
    <ligand>
        <name>5-phospho-alpha-D-ribose 1-diphosphate</name>
        <dbReference type="ChEBI" id="CHEBI:58017"/>
    </ligand>
</feature>
<feature type="binding site" evidence="1">
    <location>
        <begin position="129"/>
        <end position="137"/>
    </location>
    <ligand>
        <name>5-phospho-alpha-D-ribose 1-diphosphate</name>
        <dbReference type="ChEBI" id="CHEBI:58017"/>
    </ligand>
</feature>
<feature type="binding site" evidence="1">
    <location>
        <position position="192"/>
    </location>
    <ligand>
        <name>uracil</name>
        <dbReference type="ChEBI" id="CHEBI:17568"/>
    </ligand>
</feature>
<feature type="binding site" evidence="1">
    <location>
        <begin position="197"/>
        <end position="199"/>
    </location>
    <ligand>
        <name>uracil</name>
        <dbReference type="ChEBI" id="CHEBI:17568"/>
    </ligand>
</feature>
<feature type="binding site" evidence="1">
    <location>
        <position position="198"/>
    </location>
    <ligand>
        <name>5-phospho-alpha-D-ribose 1-diphosphate</name>
        <dbReference type="ChEBI" id="CHEBI:58017"/>
    </ligand>
</feature>
<organism>
    <name type="scientific">Fervidobacterium nodosum (strain ATCC 35602 / DSM 5306 / Rt17-B1)</name>
    <dbReference type="NCBI Taxonomy" id="381764"/>
    <lineage>
        <taxon>Bacteria</taxon>
        <taxon>Thermotogati</taxon>
        <taxon>Thermotogota</taxon>
        <taxon>Thermotogae</taxon>
        <taxon>Thermotogales</taxon>
        <taxon>Fervidobacteriaceae</taxon>
        <taxon>Fervidobacterium</taxon>
    </lineage>
</organism>
<reference key="1">
    <citation type="submission" date="2007-07" db="EMBL/GenBank/DDBJ databases">
        <title>Complete sequence of Fervidobacterium nodosum Rt17-B1.</title>
        <authorList>
            <consortium name="US DOE Joint Genome Institute"/>
            <person name="Copeland A."/>
            <person name="Lucas S."/>
            <person name="Lapidus A."/>
            <person name="Barry K."/>
            <person name="Glavina del Rio T."/>
            <person name="Dalin E."/>
            <person name="Tice H."/>
            <person name="Pitluck S."/>
            <person name="Saunders E."/>
            <person name="Brettin T."/>
            <person name="Bruce D."/>
            <person name="Detter J.C."/>
            <person name="Han C."/>
            <person name="Schmutz J."/>
            <person name="Larimer F."/>
            <person name="Land M."/>
            <person name="Hauser L."/>
            <person name="Kyrpides N."/>
            <person name="Mikhailova N."/>
            <person name="Nelson K."/>
            <person name="Gogarten J.P."/>
            <person name="Noll K."/>
            <person name="Richardson P."/>
        </authorList>
    </citation>
    <scope>NUCLEOTIDE SEQUENCE [LARGE SCALE GENOMIC DNA]</scope>
    <source>
        <strain>ATCC 35602 / DSM 5306 / Rt17-B1</strain>
    </source>
</reference>
<evidence type="ECO:0000255" key="1">
    <source>
        <dbReference type="HAMAP-Rule" id="MF_01218"/>
    </source>
</evidence>
<accession>A7HJR3</accession>
<keyword id="KW-0021">Allosteric enzyme</keyword>
<keyword id="KW-0328">Glycosyltransferase</keyword>
<keyword id="KW-0342">GTP-binding</keyword>
<keyword id="KW-0460">Magnesium</keyword>
<keyword id="KW-0547">Nucleotide-binding</keyword>
<keyword id="KW-1185">Reference proteome</keyword>
<keyword id="KW-0808">Transferase</keyword>
<proteinExistence type="inferred from homology"/>
<comment type="function">
    <text evidence="1">Catalyzes the conversion of uracil and 5-phospho-alpha-D-ribose 1-diphosphate (PRPP) to UMP and diphosphate.</text>
</comment>
<comment type="catalytic activity">
    <reaction evidence="1">
        <text>UMP + diphosphate = 5-phospho-alpha-D-ribose 1-diphosphate + uracil</text>
        <dbReference type="Rhea" id="RHEA:13017"/>
        <dbReference type="ChEBI" id="CHEBI:17568"/>
        <dbReference type="ChEBI" id="CHEBI:33019"/>
        <dbReference type="ChEBI" id="CHEBI:57865"/>
        <dbReference type="ChEBI" id="CHEBI:58017"/>
        <dbReference type="EC" id="2.4.2.9"/>
    </reaction>
</comment>
<comment type="cofactor">
    <cofactor evidence="1">
        <name>Mg(2+)</name>
        <dbReference type="ChEBI" id="CHEBI:18420"/>
    </cofactor>
    <text evidence="1">Binds 1 Mg(2+) ion per subunit. The magnesium is bound as Mg-PRPP.</text>
</comment>
<comment type="activity regulation">
    <text evidence="1">Allosterically activated by GTP.</text>
</comment>
<comment type="pathway">
    <text evidence="1">Pyrimidine metabolism; UMP biosynthesis via salvage pathway; UMP from uracil: step 1/1.</text>
</comment>
<comment type="similarity">
    <text evidence="1">Belongs to the UPRTase family.</text>
</comment>